<proteinExistence type="inferred from homology"/>
<name>SYE_CHLPD</name>
<protein>
    <recommendedName>
        <fullName evidence="1">Glutamate--tRNA ligase</fullName>
        <ecNumber evidence="1">6.1.1.17</ecNumber>
    </recommendedName>
    <alternativeName>
        <fullName evidence="1">Glutamyl-tRNA synthetase</fullName>
        <shortName evidence="1">GluRS</shortName>
    </alternativeName>
</protein>
<evidence type="ECO:0000255" key="1">
    <source>
        <dbReference type="HAMAP-Rule" id="MF_00022"/>
    </source>
</evidence>
<organism>
    <name type="scientific">Chlorobium phaeobacteroides (strain DSM 266 / SMG 266 / 2430)</name>
    <dbReference type="NCBI Taxonomy" id="290317"/>
    <lineage>
        <taxon>Bacteria</taxon>
        <taxon>Pseudomonadati</taxon>
        <taxon>Chlorobiota</taxon>
        <taxon>Chlorobiia</taxon>
        <taxon>Chlorobiales</taxon>
        <taxon>Chlorobiaceae</taxon>
        <taxon>Chlorobium/Pelodictyon group</taxon>
        <taxon>Chlorobium</taxon>
    </lineage>
</organism>
<reference key="1">
    <citation type="submission" date="2006-12" db="EMBL/GenBank/DDBJ databases">
        <title>Complete sequence of Chlorobium phaeobacteroides DSM 266.</title>
        <authorList>
            <consortium name="US DOE Joint Genome Institute"/>
            <person name="Copeland A."/>
            <person name="Lucas S."/>
            <person name="Lapidus A."/>
            <person name="Barry K."/>
            <person name="Detter J.C."/>
            <person name="Glavina del Rio T."/>
            <person name="Hammon N."/>
            <person name="Israni S."/>
            <person name="Pitluck S."/>
            <person name="Goltsman E."/>
            <person name="Schmutz J."/>
            <person name="Larimer F."/>
            <person name="Land M."/>
            <person name="Hauser L."/>
            <person name="Mikhailova N."/>
            <person name="Li T."/>
            <person name="Overmann J."/>
            <person name="Bryant D.A."/>
            <person name="Richardson P."/>
        </authorList>
    </citation>
    <scope>NUCLEOTIDE SEQUENCE [LARGE SCALE GENOMIC DNA]</scope>
    <source>
        <strain>DSM 266 / SMG 266 / 2430</strain>
    </source>
</reference>
<dbReference type="EC" id="6.1.1.17" evidence="1"/>
<dbReference type="EMBL" id="CP000492">
    <property type="protein sequence ID" value="ABL64485.1"/>
    <property type="molecule type" value="Genomic_DNA"/>
</dbReference>
<dbReference type="RefSeq" id="WP_011744318.1">
    <property type="nucleotide sequence ID" value="NC_008639.1"/>
</dbReference>
<dbReference type="SMR" id="A1BDK8"/>
<dbReference type="STRING" id="290317.Cpha266_0427"/>
<dbReference type="KEGG" id="cph:Cpha266_0427"/>
<dbReference type="eggNOG" id="COG0008">
    <property type="taxonomic scope" value="Bacteria"/>
</dbReference>
<dbReference type="HOGENOM" id="CLU_015768_6_3_10"/>
<dbReference type="OrthoDB" id="9807503at2"/>
<dbReference type="Proteomes" id="UP000008701">
    <property type="component" value="Chromosome"/>
</dbReference>
<dbReference type="GO" id="GO:0005737">
    <property type="term" value="C:cytoplasm"/>
    <property type="evidence" value="ECO:0007669"/>
    <property type="project" value="UniProtKB-SubCell"/>
</dbReference>
<dbReference type="GO" id="GO:0005524">
    <property type="term" value="F:ATP binding"/>
    <property type="evidence" value="ECO:0007669"/>
    <property type="project" value="UniProtKB-UniRule"/>
</dbReference>
<dbReference type="GO" id="GO:0004818">
    <property type="term" value="F:glutamate-tRNA ligase activity"/>
    <property type="evidence" value="ECO:0007669"/>
    <property type="project" value="UniProtKB-UniRule"/>
</dbReference>
<dbReference type="GO" id="GO:0000049">
    <property type="term" value="F:tRNA binding"/>
    <property type="evidence" value="ECO:0007669"/>
    <property type="project" value="InterPro"/>
</dbReference>
<dbReference type="GO" id="GO:0008270">
    <property type="term" value="F:zinc ion binding"/>
    <property type="evidence" value="ECO:0007669"/>
    <property type="project" value="InterPro"/>
</dbReference>
<dbReference type="GO" id="GO:0006424">
    <property type="term" value="P:glutamyl-tRNA aminoacylation"/>
    <property type="evidence" value="ECO:0007669"/>
    <property type="project" value="UniProtKB-UniRule"/>
</dbReference>
<dbReference type="CDD" id="cd00808">
    <property type="entry name" value="GluRS_core"/>
    <property type="match status" value="1"/>
</dbReference>
<dbReference type="FunFam" id="3.40.50.620:FF:000045">
    <property type="entry name" value="Glutamate--tRNA ligase, mitochondrial"/>
    <property type="match status" value="1"/>
</dbReference>
<dbReference type="Gene3D" id="1.10.10.350">
    <property type="match status" value="1"/>
</dbReference>
<dbReference type="Gene3D" id="3.40.50.620">
    <property type="entry name" value="HUPs"/>
    <property type="match status" value="1"/>
</dbReference>
<dbReference type="HAMAP" id="MF_00022">
    <property type="entry name" value="Glu_tRNA_synth_type1"/>
    <property type="match status" value="1"/>
</dbReference>
<dbReference type="InterPro" id="IPR045462">
    <property type="entry name" value="aa-tRNA-synth_I_cd-bd"/>
</dbReference>
<dbReference type="InterPro" id="IPR020751">
    <property type="entry name" value="aa-tRNA-synth_I_codon-bd_sub2"/>
</dbReference>
<dbReference type="InterPro" id="IPR001412">
    <property type="entry name" value="aa-tRNA-synth_I_CS"/>
</dbReference>
<dbReference type="InterPro" id="IPR008925">
    <property type="entry name" value="aa_tRNA-synth_I_cd-bd_sf"/>
</dbReference>
<dbReference type="InterPro" id="IPR004527">
    <property type="entry name" value="Glu-tRNA-ligase_bac/mito"/>
</dbReference>
<dbReference type="InterPro" id="IPR000924">
    <property type="entry name" value="Glu/Gln-tRNA-synth"/>
</dbReference>
<dbReference type="InterPro" id="IPR020058">
    <property type="entry name" value="Glu/Gln-tRNA-synth_Ib_cat-dom"/>
</dbReference>
<dbReference type="InterPro" id="IPR049940">
    <property type="entry name" value="GluQ/Sye"/>
</dbReference>
<dbReference type="InterPro" id="IPR033910">
    <property type="entry name" value="GluRS_core"/>
</dbReference>
<dbReference type="InterPro" id="IPR014729">
    <property type="entry name" value="Rossmann-like_a/b/a_fold"/>
</dbReference>
<dbReference type="NCBIfam" id="TIGR00464">
    <property type="entry name" value="gltX_bact"/>
    <property type="match status" value="1"/>
</dbReference>
<dbReference type="PANTHER" id="PTHR43311">
    <property type="entry name" value="GLUTAMATE--TRNA LIGASE"/>
    <property type="match status" value="1"/>
</dbReference>
<dbReference type="PANTHER" id="PTHR43311:SF2">
    <property type="entry name" value="GLUTAMATE--TRNA LIGASE, MITOCHONDRIAL-RELATED"/>
    <property type="match status" value="1"/>
</dbReference>
<dbReference type="Pfam" id="PF19269">
    <property type="entry name" value="Anticodon_2"/>
    <property type="match status" value="1"/>
</dbReference>
<dbReference type="Pfam" id="PF00749">
    <property type="entry name" value="tRNA-synt_1c"/>
    <property type="match status" value="1"/>
</dbReference>
<dbReference type="PRINTS" id="PR00987">
    <property type="entry name" value="TRNASYNTHGLU"/>
</dbReference>
<dbReference type="SUPFAM" id="SSF48163">
    <property type="entry name" value="An anticodon-binding domain of class I aminoacyl-tRNA synthetases"/>
    <property type="match status" value="1"/>
</dbReference>
<dbReference type="SUPFAM" id="SSF52374">
    <property type="entry name" value="Nucleotidylyl transferase"/>
    <property type="match status" value="1"/>
</dbReference>
<dbReference type="PROSITE" id="PS00178">
    <property type="entry name" value="AA_TRNA_LIGASE_I"/>
    <property type="match status" value="1"/>
</dbReference>
<accession>A1BDK8</accession>
<keyword id="KW-0030">Aminoacyl-tRNA synthetase</keyword>
<keyword id="KW-0067">ATP-binding</keyword>
<keyword id="KW-0963">Cytoplasm</keyword>
<keyword id="KW-0436">Ligase</keyword>
<keyword id="KW-0547">Nucleotide-binding</keyword>
<keyword id="KW-0648">Protein biosynthesis</keyword>
<keyword id="KW-1185">Reference proteome</keyword>
<comment type="function">
    <text evidence="1">Catalyzes the attachment of glutamate to tRNA(Glu) in a two-step reaction: glutamate is first activated by ATP to form Glu-AMP and then transferred to the acceptor end of tRNA(Glu).</text>
</comment>
<comment type="catalytic activity">
    <reaction evidence="1">
        <text>tRNA(Glu) + L-glutamate + ATP = L-glutamyl-tRNA(Glu) + AMP + diphosphate</text>
        <dbReference type="Rhea" id="RHEA:23540"/>
        <dbReference type="Rhea" id="RHEA-COMP:9663"/>
        <dbReference type="Rhea" id="RHEA-COMP:9680"/>
        <dbReference type="ChEBI" id="CHEBI:29985"/>
        <dbReference type="ChEBI" id="CHEBI:30616"/>
        <dbReference type="ChEBI" id="CHEBI:33019"/>
        <dbReference type="ChEBI" id="CHEBI:78442"/>
        <dbReference type="ChEBI" id="CHEBI:78520"/>
        <dbReference type="ChEBI" id="CHEBI:456215"/>
        <dbReference type="EC" id="6.1.1.17"/>
    </reaction>
</comment>
<comment type="subunit">
    <text evidence="1">Monomer.</text>
</comment>
<comment type="subcellular location">
    <subcellularLocation>
        <location evidence="1">Cytoplasm</location>
    </subcellularLocation>
</comment>
<comment type="similarity">
    <text evidence="1">Belongs to the class-I aminoacyl-tRNA synthetase family. Glutamate--tRNA ligase type 1 subfamily.</text>
</comment>
<feature type="chain" id="PRO_1000001887" description="Glutamate--tRNA ligase">
    <location>
        <begin position="1"/>
        <end position="502"/>
    </location>
</feature>
<feature type="short sequence motif" description="'HIGH' region" evidence="1">
    <location>
        <begin position="12"/>
        <end position="22"/>
    </location>
</feature>
<feature type="short sequence motif" description="'KMSKS' region" evidence="1">
    <location>
        <begin position="259"/>
        <end position="263"/>
    </location>
</feature>
<feature type="binding site" evidence="1">
    <location>
        <position position="262"/>
    </location>
    <ligand>
        <name>ATP</name>
        <dbReference type="ChEBI" id="CHEBI:30616"/>
    </ligand>
</feature>
<sequence>MVAQRYRTRFAPSPTGYLHVGGLRTALYNYLFVKKMKGDFVLRIEDTDRSRRVEGAQQNLLKTLEWAGIVPDESPELGGDFGPYIQSERLEIYKKYCDELLEGKYAYYCFATSEELEENRQLQLKQGLQPKYNRKWLPEEMGGSMPSSEIRKKMEQNAPYVIRMKVPDYVSVWFEDLIRGPVEFDSSTIDDQVLMKSDGFPTYHFASVIDDHLMEFTHIIRGEEWLPSMPKHLLLYEFFGWEPPKFAHLPLLLNPDRSKLSKRQGDVAVEDYIRKGYSAEAIVNFVAMLGWNEGEGTEQEVYSLEQLVERFSLERVGKAGAIFNVDKLNWLEKQYIKSRSADRIIAVIKPLLMAELEKRPTAMHESVITSDLYLEQVIELMRERVGFEHEFVTFSPYFFFDPETYEEEGVRKRWTAETNTLLREFVTVLASLDAFTAEAIETELKAFVAPKGLKAAALIHPLRILCSGVSFGPSLYHMLEVLGKDAVIRRISRGIETVVCLS</sequence>
<gene>
    <name evidence="1" type="primary">gltX</name>
    <name type="ordered locus">Cpha266_0427</name>
</gene>